<dbReference type="PIR" id="S03955">
    <property type="entry name" value="S03955"/>
</dbReference>
<dbReference type="FunCoup" id="P18651">
    <property type="interactions" value="6"/>
</dbReference>
<dbReference type="InParanoid" id="P18651"/>
<dbReference type="OrthoDB" id="5987799at2759"/>
<dbReference type="Proteomes" id="UP000002254">
    <property type="component" value="Unplaced"/>
</dbReference>
<dbReference type="Proteomes" id="UP000694429">
    <property type="component" value="Unplaced"/>
</dbReference>
<dbReference type="Proteomes" id="UP000694542">
    <property type="component" value="Unplaced"/>
</dbReference>
<dbReference type="Proteomes" id="UP000805418">
    <property type="component" value="Unplaced"/>
</dbReference>
<dbReference type="GO" id="GO:0005938">
    <property type="term" value="C:cell cortex"/>
    <property type="evidence" value="ECO:0007669"/>
    <property type="project" value="UniProtKB-SubCell"/>
</dbReference>
<dbReference type="GO" id="GO:0005829">
    <property type="term" value="C:cytosol"/>
    <property type="evidence" value="ECO:0000250"/>
    <property type="project" value="UniProtKB"/>
</dbReference>
<dbReference type="GO" id="GO:0005576">
    <property type="term" value="C:extracellular region"/>
    <property type="evidence" value="ECO:0000250"/>
    <property type="project" value="UniProtKB"/>
</dbReference>
<dbReference type="GO" id="GO:0005615">
    <property type="term" value="C:extracellular space"/>
    <property type="evidence" value="ECO:0000250"/>
    <property type="project" value="UniProtKB"/>
</dbReference>
<dbReference type="GO" id="GO:0005634">
    <property type="term" value="C:nucleus"/>
    <property type="evidence" value="ECO:0007669"/>
    <property type="project" value="UniProtKB-SubCell"/>
</dbReference>
<dbReference type="GO" id="GO:0005104">
    <property type="term" value="F:fibroblast growth factor receptor binding"/>
    <property type="evidence" value="ECO:0000250"/>
    <property type="project" value="UniProtKB"/>
</dbReference>
<dbReference type="GO" id="GO:0008083">
    <property type="term" value="F:growth factor activity"/>
    <property type="evidence" value="ECO:0000250"/>
    <property type="project" value="UniProtKB"/>
</dbReference>
<dbReference type="GO" id="GO:0008201">
    <property type="term" value="F:heparin binding"/>
    <property type="evidence" value="ECO:0000250"/>
    <property type="project" value="UniProtKB"/>
</dbReference>
<dbReference type="GO" id="GO:0005178">
    <property type="term" value="F:integrin binding"/>
    <property type="evidence" value="ECO:0000250"/>
    <property type="project" value="UniProtKB"/>
</dbReference>
<dbReference type="GO" id="GO:0044548">
    <property type="term" value="F:S100 protein binding"/>
    <property type="evidence" value="ECO:0000250"/>
    <property type="project" value="UniProtKB"/>
</dbReference>
<dbReference type="GO" id="GO:0032148">
    <property type="term" value="P:activation of protein kinase B activity"/>
    <property type="evidence" value="ECO:0000250"/>
    <property type="project" value="UniProtKB"/>
</dbReference>
<dbReference type="GO" id="GO:0001525">
    <property type="term" value="P:angiogenesis"/>
    <property type="evidence" value="ECO:0007669"/>
    <property type="project" value="UniProtKB-KW"/>
</dbReference>
<dbReference type="GO" id="GO:0060681">
    <property type="term" value="P:branch elongation involved in ureteric bud branching"/>
    <property type="evidence" value="ECO:0000250"/>
    <property type="project" value="UniProtKB"/>
</dbReference>
<dbReference type="GO" id="GO:0030154">
    <property type="term" value="P:cell differentiation"/>
    <property type="evidence" value="ECO:0007669"/>
    <property type="project" value="UniProtKB-KW"/>
</dbReference>
<dbReference type="GO" id="GO:0034605">
    <property type="term" value="P:cellular response to heat"/>
    <property type="evidence" value="ECO:0000250"/>
    <property type="project" value="UniProtKB"/>
</dbReference>
<dbReference type="GO" id="GO:0008543">
    <property type="term" value="P:fibroblast growth factor receptor signaling pathway"/>
    <property type="evidence" value="ECO:0000250"/>
    <property type="project" value="UniProtKB"/>
</dbReference>
<dbReference type="GO" id="GO:0072163">
    <property type="term" value="P:mesonephric epithelium development"/>
    <property type="evidence" value="ECO:0000250"/>
    <property type="project" value="UniProtKB"/>
</dbReference>
<dbReference type="GO" id="GO:0045766">
    <property type="term" value="P:positive regulation of angiogenesis"/>
    <property type="evidence" value="ECO:0000250"/>
    <property type="project" value="UniProtKB"/>
</dbReference>
<dbReference type="GO" id="GO:0051781">
    <property type="term" value="P:positive regulation of cell division"/>
    <property type="evidence" value="ECO:0000250"/>
    <property type="project" value="UniProtKB"/>
</dbReference>
<dbReference type="GO" id="GO:0030335">
    <property type="term" value="P:positive regulation of cell migration"/>
    <property type="evidence" value="ECO:0000250"/>
    <property type="project" value="UniProtKB"/>
</dbReference>
<dbReference type="GO" id="GO:0008284">
    <property type="term" value="P:positive regulation of cell population proliferation"/>
    <property type="evidence" value="ECO:0000250"/>
    <property type="project" value="UniProtKB"/>
</dbReference>
<dbReference type="GO" id="GO:0045542">
    <property type="term" value="P:positive regulation of cholesterol biosynthetic process"/>
    <property type="evidence" value="ECO:0000250"/>
    <property type="project" value="UniProtKB"/>
</dbReference>
<dbReference type="GO" id="GO:0010595">
    <property type="term" value="P:positive regulation of endothelial cell migration"/>
    <property type="evidence" value="ECO:0000250"/>
    <property type="project" value="UniProtKB"/>
</dbReference>
<dbReference type="GO" id="GO:0070374">
    <property type="term" value="P:positive regulation of ERK1 and ERK2 cascade"/>
    <property type="evidence" value="ECO:0000250"/>
    <property type="project" value="UniProtKB"/>
</dbReference>
<dbReference type="GO" id="GO:1902533">
    <property type="term" value="P:positive regulation of intracellular signal transduction"/>
    <property type="evidence" value="ECO:0000250"/>
    <property type="project" value="UniProtKB"/>
</dbReference>
<dbReference type="GO" id="GO:1903672">
    <property type="term" value="P:positive regulation of sprouting angiogenesis"/>
    <property type="evidence" value="ECO:0000250"/>
    <property type="project" value="UniProtKB"/>
</dbReference>
<dbReference type="GO" id="GO:0045944">
    <property type="term" value="P:positive regulation of transcription by RNA polymerase II"/>
    <property type="evidence" value="ECO:0000250"/>
    <property type="project" value="UniProtKB"/>
</dbReference>
<dbReference type="GO" id="GO:1901509">
    <property type="term" value="P:regulation of endothelial tube morphogenesis"/>
    <property type="evidence" value="ECO:0000250"/>
    <property type="project" value="UniProtKB"/>
</dbReference>
<organism>
    <name type="scientific">Canis lupus familiaris</name>
    <name type="common">Dog</name>
    <name type="synonym">Canis familiaris</name>
    <dbReference type="NCBI Taxonomy" id="9615"/>
    <lineage>
        <taxon>Eukaryota</taxon>
        <taxon>Metazoa</taxon>
        <taxon>Chordata</taxon>
        <taxon>Craniata</taxon>
        <taxon>Vertebrata</taxon>
        <taxon>Euteleostomi</taxon>
        <taxon>Mammalia</taxon>
        <taxon>Eutheria</taxon>
        <taxon>Laurasiatheria</taxon>
        <taxon>Carnivora</taxon>
        <taxon>Caniformia</taxon>
        <taxon>Canidae</taxon>
        <taxon>Canis</taxon>
    </lineage>
</organism>
<evidence type="ECO:0000250" key="1"/>
<evidence type="ECO:0000250" key="2">
    <source>
        <dbReference type="UniProtKB" id="P05230"/>
    </source>
</evidence>
<evidence type="ECO:0000305" key="3"/>
<protein>
    <recommendedName>
        <fullName>Fibroblast growth factor 1</fullName>
        <shortName>FGF-1</shortName>
    </recommendedName>
    <alternativeName>
        <fullName>Acidic fibroblast growth factor</fullName>
        <shortName>aFGF</shortName>
    </alternativeName>
    <alternativeName>
        <fullName>Endothelial cell growth factor</fullName>
        <shortName>ECGF</shortName>
    </alternativeName>
    <alternativeName>
        <fullName>Heparin-binding growth factor 1</fullName>
        <shortName>HBGF-1</shortName>
    </alternativeName>
</protein>
<name>FGF1_CANLF</name>
<proteinExistence type="evidence at protein level"/>
<keyword id="KW-0037">Angiogenesis</keyword>
<keyword id="KW-0963">Cytoplasm</keyword>
<keyword id="KW-0217">Developmental protein</keyword>
<keyword id="KW-0221">Differentiation</keyword>
<keyword id="KW-0903">Direct protein sequencing</keyword>
<keyword id="KW-0339">Growth factor</keyword>
<keyword id="KW-0358">Heparin-binding</keyword>
<keyword id="KW-0497">Mitogen</keyword>
<keyword id="KW-0539">Nucleus</keyword>
<keyword id="KW-0597">Phosphoprotein</keyword>
<keyword id="KW-1185">Reference proteome</keyword>
<keyword id="KW-0964">Secreted</keyword>
<gene>
    <name type="primary">FGF1</name>
</gene>
<comment type="function">
    <text evidence="2">Plays an important role in the regulation of cell survival, cell division, angiogenesis, cell differentiation and cell migration. Functions as a potent mitogen in vitro. Acts as a ligand for FGFR1 and integrins. Binds to FGFR1 in the presence of heparin leading to FGFR1 dimerization and activation via sequential autophosphorylation on tyrosine residues which act as docking sites for interacting proteins, leading to the activation of several signaling cascades. Binds to integrin ITGAV:ITGB3. Its binding to integrin, subsequent ternary complex formation with integrin and FGFR1, and the recruitment of PTPN11 to the complex are essential for FGF1 signaling. Induces the phosphorylation and activation of FGFR1, FRS2, MAPK3/ERK1, MAPK1/ERK2 and AKT1. Can induce angiogenesis.</text>
</comment>
<comment type="subunit">
    <text evidence="2">Monomer. Homodimer. Interacts with FGFR1, FGFR2, FGFR3 and FGFR4. Affinity between fibroblast growth factors (FGFs) and their receptors is increased by heparan sulfate glycosaminoglycans that function as coreceptors. Found in a complex with FGFBP1, FGF1 and FGF2. Interacts with FGFBP1. Part of a Cu(2+)-dependent multiprotein aggregate containing FGF1, S100A13 and SYT1. Interacts with SYT1. Interacts with S100A13 (By similarity). Interacts with LRRC59 (By similarity). Interacts with CSNKA, CSNKB and FIBP (By similarity). While binding with LRRC59, CSNKA and FIBP seem mutually exclusive, CSNKB and FIBP may cooperatively interact with FGF1. Forms a ternary complex with FGFR1 and ITGAV:ITGB3 and induces the recruitment of PTPN11 to the complex (By similarity).</text>
</comment>
<comment type="subcellular location">
    <subcellularLocation>
        <location>Secreted</location>
    </subcellularLocation>
    <subcellularLocation>
        <location evidence="1">Cytoplasm</location>
    </subcellularLocation>
    <subcellularLocation>
        <location evidence="1">Cytoplasm</location>
        <location evidence="1">Cell cortex</location>
    </subcellularLocation>
    <subcellularLocation>
        <location evidence="1">Cytoplasm</location>
        <location evidence="1">Cytosol</location>
    </subcellularLocation>
    <subcellularLocation>
        <location evidence="1">Nucleus</location>
    </subcellularLocation>
    <text evidence="1">Lacks a cleavable signal sequence. Within the cytoplasm, it is transported to the cell membrane and then secreted by a non-classical pathway that requires Cu(2+) ions and S100A13. Secreted in a complex with SYT1. Binding of exogenous FGF1 to FGFR facilitates endocytosis followed by translocation of FGF1 across endosomal membrane into the cytosol. Nuclear import from the cytosol requires the classical nuclear import machinery, involving proteins KPNA1 and KPNB1, as well as LRRC59 (By similarity).</text>
</comment>
<comment type="PTM">
    <text evidence="1">In the nucleus, phosphorylated by PKC/PRKCD.</text>
</comment>
<comment type="similarity">
    <text evidence="3">Belongs to the heparin-binding growth factors family.</text>
</comment>
<feature type="chain" id="PRO_0000147596" description="Fibroblast growth factor 1">
    <location>
        <begin position="1"/>
        <end position="15" status="greater than"/>
    </location>
</feature>
<feature type="non-terminal residue">
    <location>
        <position position="15"/>
    </location>
</feature>
<reference key="1">
    <citation type="journal article" date="1989" name="Eur. J. Biochem.">
        <title>Isolation of heparin-binding growth factors from bovine, porcine and canine hearts.</title>
        <authorList>
            <person name="Quinkler W."/>
            <person name="Maasberg M."/>
            <person name="Bernotat-Danielowski S."/>
            <person name="Luethe N."/>
            <person name="Sharma H.S."/>
            <person name="Schaper W."/>
        </authorList>
    </citation>
    <scope>PROTEIN SEQUENCE</scope>
</reference>
<accession>P18651</accession>
<sequence length="15" mass="1733">NYMKPKLLYXSNGGH</sequence>